<keyword id="KW-0010">Activator</keyword>
<keyword id="KW-1048">Host nucleus</keyword>
<keyword id="KW-1185">Reference proteome</keyword>
<keyword id="KW-0804">Transcription</keyword>
<keyword id="KW-0805">Transcription regulation</keyword>
<protein>
    <recommendedName>
        <fullName>Non-structural protein NP-1</fullName>
        <shortName>NP1</shortName>
    </recommendedName>
</protein>
<comment type="function">
    <text evidence="1">Required for the expression of the capsid proteins. Performs the splicing and internal polyadenylation of the viral capsid-encoding mRNA precursor, which allows its maturation and expression. Transactivates the viral promoter.</text>
</comment>
<comment type="subcellular location">
    <subcellularLocation>
        <location evidence="1">Host nucleus</location>
    </subcellularLocation>
</comment>
<comment type="similarity">
    <text evidence="4">Belongs to the Bocaparvovirus Non-structural protein NP-1 family.</text>
</comment>
<sequence length="213" mass="24716">MERSRSPRETGSTSSRDKSDADWSERRREERTRTWKSRSPIRAHGERSWGSWRSREKNQSSSTASRPYQKATRKETATKKTKHTPFNVFSAHRALSKTDLQFCGFYWHSTRLASKGTNEIFNGLKQSFQSKAIDGKLDWEGVGELLFEQKKCLDTWYRNMMYHFALGGDCEKCNYWDDVYKKHLANVDTYSVAEEITDSEMLEAAEAVDAANQ</sequence>
<organismHost>
    <name type="scientific">Bos taurus</name>
    <name type="common">Bovine</name>
    <dbReference type="NCBI Taxonomy" id="9913"/>
</organismHost>
<reference key="1">
    <citation type="journal article" date="2007" name="J. Virol.">
        <title>The transcription profile of the bocavirus bovine parvovirus is unlike those of previously characterized parvoviruses.</title>
        <authorList>
            <person name="Qiu J."/>
            <person name="Cheng F."/>
            <person name="Johnson F.B."/>
            <person name="Pintel D."/>
        </authorList>
    </citation>
    <scope>NUCLEOTIDE SEQUENCE [LARGE SCALE GENOMIC DNA]</scope>
</reference>
<reference key="2">
    <citation type="journal article" date="1986" name="J. Virol.">
        <title>Complete nucleotide sequence and genome organization of bovine parvovirus.</title>
        <authorList>
            <person name="Chen K.C."/>
            <person name="Shull B.C."/>
            <person name="Moses E.A."/>
            <person name="Lederman M."/>
            <person name="Stout E.R."/>
            <person name="Bates R.C."/>
        </authorList>
    </citation>
    <scope>NUCLEOTIDE SEQUENCE [GENOMIC DNA]</scope>
    <scope>VARIANTS ARG-44 AND ARG-143</scope>
</reference>
<organism>
    <name type="scientific">Bovine parvovirus 1</name>
    <name type="common">BPV-1</name>
    <dbReference type="NCBI Taxonomy" id="2839036"/>
    <lineage>
        <taxon>Viruses</taxon>
        <taxon>Monodnaviria</taxon>
        <taxon>Shotokuvirae</taxon>
        <taxon>Cossaviricota</taxon>
        <taxon>Quintoviricetes</taxon>
        <taxon>Piccovirales</taxon>
        <taxon>Parvoviridae</taxon>
        <taxon>Parvovirinae</taxon>
        <taxon>Bocaparvovirus</taxon>
        <taxon>Bocaparvovirus ungulate1</taxon>
    </lineage>
</organism>
<proteinExistence type="inferred from homology"/>
<dbReference type="EMBL" id="M14363">
    <property type="protein sequence ID" value="AAB59846.1"/>
    <property type="molecule type" value="Genomic_DNA"/>
</dbReference>
<dbReference type="EMBL" id="DQ335247">
    <property type="protein sequence ID" value="ABC69728.1"/>
    <property type="molecule type" value="Genomic_DNA"/>
</dbReference>
<dbReference type="PIR" id="B26104">
    <property type="entry name" value="UYPVP1"/>
</dbReference>
<dbReference type="RefSeq" id="NP_041403.1">
    <property type="nucleotide sequence ID" value="NC_001540.1"/>
</dbReference>
<dbReference type="KEGG" id="vg:1724584"/>
<dbReference type="OrthoDB" id="10942at10239"/>
<dbReference type="Proteomes" id="UP000007022">
    <property type="component" value="Segment"/>
</dbReference>
<dbReference type="Proteomes" id="UP000170734">
    <property type="component" value="Segment"/>
</dbReference>
<dbReference type="GO" id="GO:0042025">
    <property type="term" value="C:host cell nucleus"/>
    <property type="evidence" value="ECO:0007669"/>
    <property type="project" value="UniProtKB-SubCell"/>
</dbReference>
<dbReference type="InterPro" id="IPR021075">
    <property type="entry name" value="Bocavirus_NP1"/>
</dbReference>
<dbReference type="Pfam" id="PF11733">
    <property type="entry name" value="NP1-WLL"/>
    <property type="match status" value="1"/>
</dbReference>
<gene>
    <name type="primary">NP1</name>
    <name type="synonym">NP-1</name>
</gene>
<accession>P07295</accession>
<accession>Q2LD57</accession>
<name>NP1_PAVBP</name>
<feature type="chain" id="PRO_0000222475" description="Non-structural protein NP-1">
    <location>
        <begin position="1"/>
        <end position="213"/>
    </location>
</feature>
<feature type="region of interest" description="Disordered" evidence="2">
    <location>
        <begin position="1"/>
        <end position="80"/>
    </location>
</feature>
<feature type="compositionally biased region" description="Basic and acidic residues" evidence="2">
    <location>
        <begin position="15"/>
        <end position="33"/>
    </location>
</feature>
<feature type="compositionally biased region" description="Basic and acidic residues" evidence="2">
    <location>
        <begin position="43"/>
        <end position="58"/>
    </location>
</feature>
<feature type="sequence variant" evidence="3">
    <original>H</original>
    <variation>R</variation>
    <location>
        <position position="44"/>
    </location>
</feature>
<feature type="sequence variant" evidence="3">
    <original>G</original>
    <variation>R</variation>
    <location>
        <position position="143"/>
    </location>
</feature>
<evidence type="ECO:0000250" key="1">
    <source>
        <dbReference type="UniProtKB" id="Q3YPH5"/>
    </source>
</evidence>
<evidence type="ECO:0000256" key="2">
    <source>
        <dbReference type="SAM" id="MobiDB-lite"/>
    </source>
</evidence>
<evidence type="ECO:0000269" key="3">
    <source>
    </source>
</evidence>
<evidence type="ECO:0000305" key="4"/>